<keyword id="KW-0328">Glycosyltransferase</keyword>
<keyword id="KW-0479">Metal-binding</keyword>
<keyword id="KW-0671">Queuosine biosynthesis</keyword>
<keyword id="KW-0808">Transferase</keyword>
<keyword id="KW-0819">tRNA processing</keyword>
<keyword id="KW-0862">Zinc</keyword>
<reference key="1">
    <citation type="journal article" date="2007" name="Genome Res.">
        <title>Lateral gene transfer between obligate intracellular bacteria: evidence from the Rickettsia massiliae genome.</title>
        <authorList>
            <person name="Blanc G."/>
            <person name="Ogata H."/>
            <person name="Robert C."/>
            <person name="Audic S."/>
            <person name="Claverie J.-M."/>
            <person name="Raoult D."/>
        </authorList>
    </citation>
    <scope>NUCLEOTIDE SEQUENCE [LARGE SCALE GENOMIC DNA]</scope>
    <source>
        <strain>Mtu5</strain>
    </source>
</reference>
<proteinExistence type="inferred from homology"/>
<protein>
    <recommendedName>
        <fullName evidence="1">Queuine tRNA-ribosyltransferase</fullName>
        <ecNumber evidence="1">2.4.2.29</ecNumber>
    </recommendedName>
    <alternativeName>
        <fullName evidence="1">Guanine insertion enzyme</fullName>
    </alternativeName>
    <alternativeName>
        <fullName evidence="1">tRNA-guanine transglycosylase</fullName>
    </alternativeName>
</protein>
<accession>A8F2K6</accession>
<sequence length="361" mass="40628">MSKFSFNIHHQHKKARSGIIVTAHGEMRTPAFMPVGTRGTVKAMLPESVAETGADILLGNTYHLMLQPTAERIVLLGGLHKFMNWDKPILTDSGGFQVMSLSKLRKITEEGVSFSSHINGDKYMLTPERSTEIQYLLGSTITMAFDECTPYPATFEEAKTSMQLTTRWANRSRNAFVKREGYAQFGIIQGSVYEELREQSAKDLVELDFEGYAIGGLAVGEGQELMFKVLDYAPDFLPQNKPRYLMGVGKPADIIGAVSRGIDMFDCVIPTRAGRNGQAFTKYGTVNIRNSKYADDNKPLEHDCLCPACRNYSKAYLHHLVRIGEILGSMLMTWHNLTYFQNLMSRIREYIKLGKDFDFDS</sequence>
<dbReference type="EC" id="2.4.2.29" evidence="1"/>
<dbReference type="EMBL" id="CP000683">
    <property type="protein sequence ID" value="ABV85142.1"/>
    <property type="molecule type" value="Genomic_DNA"/>
</dbReference>
<dbReference type="RefSeq" id="WP_012153106.1">
    <property type="nucleotide sequence ID" value="NC_009900.1"/>
</dbReference>
<dbReference type="SMR" id="A8F2K6"/>
<dbReference type="KEGG" id="rms:RMA_1133"/>
<dbReference type="HOGENOM" id="CLU_022060_0_1_5"/>
<dbReference type="UniPathway" id="UPA00392"/>
<dbReference type="Proteomes" id="UP000001311">
    <property type="component" value="Chromosome"/>
</dbReference>
<dbReference type="GO" id="GO:0005737">
    <property type="term" value="C:cytoplasm"/>
    <property type="evidence" value="ECO:0007669"/>
    <property type="project" value="TreeGrafter"/>
</dbReference>
<dbReference type="GO" id="GO:0046872">
    <property type="term" value="F:metal ion binding"/>
    <property type="evidence" value="ECO:0007669"/>
    <property type="project" value="UniProtKB-KW"/>
</dbReference>
<dbReference type="GO" id="GO:0008479">
    <property type="term" value="F:tRNA-guanosine(34) queuine transglycosylase activity"/>
    <property type="evidence" value="ECO:0007669"/>
    <property type="project" value="UniProtKB-UniRule"/>
</dbReference>
<dbReference type="GO" id="GO:0008616">
    <property type="term" value="P:queuosine biosynthetic process"/>
    <property type="evidence" value="ECO:0007669"/>
    <property type="project" value="UniProtKB-UniRule"/>
</dbReference>
<dbReference type="GO" id="GO:0002099">
    <property type="term" value="P:tRNA wobble guanine modification"/>
    <property type="evidence" value="ECO:0007669"/>
    <property type="project" value="TreeGrafter"/>
</dbReference>
<dbReference type="GO" id="GO:0101030">
    <property type="term" value="P:tRNA-guanine transglycosylation"/>
    <property type="evidence" value="ECO:0007669"/>
    <property type="project" value="InterPro"/>
</dbReference>
<dbReference type="FunFam" id="3.20.20.105:FF:000001">
    <property type="entry name" value="Queuine tRNA-ribosyltransferase"/>
    <property type="match status" value="1"/>
</dbReference>
<dbReference type="Gene3D" id="3.20.20.105">
    <property type="entry name" value="Queuine tRNA-ribosyltransferase-like"/>
    <property type="match status" value="1"/>
</dbReference>
<dbReference type="HAMAP" id="MF_00168">
    <property type="entry name" value="Q_tRNA_Tgt"/>
    <property type="match status" value="1"/>
</dbReference>
<dbReference type="InterPro" id="IPR050076">
    <property type="entry name" value="ArchSynthase1/Queuine_TRR"/>
</dbReference>
<dbReference type="InterPro" id="IPR004803">
    <property type="entry name" value="TGT"/>
</dbReference>
<dbReference type="InterPro" id="IPR036511">
    <property type="entry name" value="TGT-like_sf"/>
</dbReference>
<dbReference type="InterPro" id="IPR002616">
    <property type="entry name" value="tRNA_ribo_trans-like"/>
</dbReference>
<dbReference type="NCBIfam" id="TIGR00430">
    <property type="entry name" value="Q_tRNA_tgt"/>
    <property type="match status" value="1"/>
</dbReference>
<dbReference type="NCBIfam" id="TIGR00449">
    <property type="entry name" value="tgt_general"/>
    <property type="match status" value="1"/>
</dbReference>
<dbReference type="PANTHER" id="PTHR46499">
    <property type="entry name" value="QUEUINE TRNA-RIBOSYLTRANSFERASE"/>
    <property type="match status" value="1"/>
</dbReference>
<dbReference type="PANTHER" id="PTHR46499:SF1">
    <property type="entry name" value="QUEUINE TRNA-RIBOSYLTRANSFERASE"/>
    <property type="match status" value="1"/>
</dbReference>
<dbReference type="Pfam" id="PF01702">
    <property type="entry name" value="TGT"/>
    <property type="match status" value="1"/>
</dbReference>
<dbReference type="SUPFAM" id="SSF51713">
    <property type="entry name" value="tRNA-guanine transglycosylase"/>
    <property type="match status" value="1"/>
</dbReference>
<name>TGT_RICM5</name>
<evidence type="ECO:0000255" key="1">
    <source>
        <dbReference type="HAMAP-Rule" id="MF_00168"/>
    </source>
</evidence>
<feature type="chain" id="PRO_1000058287" description="Queuine tRNA-ribosyltransferase">
    <location>
        <begin position="1"/>
        <end position="361"/>
    </location>
</feature>
<feature type="region of interest" description="RNA binding" evidence="1">
    <location>
        <begin position="247"/>
        <end position="253"/>
    </location>
</feature>
<feature type="region of interest" description="RNA binding; important for wobble base 34 recognition" evidence="1">
    <location>
        <begin position="271"/>
        <end position="275"/>
    </location>
</feature>
<feature type="active site" description="Proton acceptor" evidence="1">
    <location>
        <position position="92"/>
    </location>
</feature>
<feature type="active site" description="Nucleophile" evidence="1">
    <location>
        <position position="266"/>
    </location>
</feature>
<feature type="binding site" evidence="1">
    <location>
        <begin position="92"/>
        <end position="96"/>
    </location>
    <ligand>
        <name>substrate</name>
    </ligand>
</feature>
<feature type="binding site" evidence="1">
    <location>
        <position position="146"/>
    </location>
    <ligand>
        <name>substrate</name>
    </ligand>
</feature>
<feature type="binding site" evidence="1">
    <location>
        <position position="189"/>
    </location>
    <ligand>
        <name>substrate</name>
    </ligand>
</feature>
<feature type="binding site" evidence="1">
    <location>
        <position position="216"/>
    </location>
    <ligand>
        <name>substrate</name>
    </ligand>
</feature>
<feature type="binding site" evidence="1">
    <location>
        <position position="304"/>
    </location>
    <ligand>
        <name>Zn(2+)</name>
        <dbReference type="ChEBI" id="CHEBI:29105"/>
    </ligand>
</feature>
<feature type="binding site" evidence="1">
    <location>
        <position position="306"/>
    </location>
    <ligand>
        <name>Zn(2+)</name>
        <dbReference type="ChEBI" id="CHEBI:29105"/>
    </ligand>
</feature>
<feature type="binding site" evidence="1">
    <location>
        <position position="309"/>
    </location>
    <ligand>
        <name>Zn(2+)</name>
        <dbReference type="ChEBI" id="CHEBI:29105"/>
    </ligand>
</feature>
<feature type="binding site" evidence="1">
    <location>
        <position position="335"/>
    </location>
    <ligand>
        <name>Zn(2+)</name>
        <dbReference type="ChEBI" id="CHEBI:29105"/>
    </ligand>
</feature>
<organism>
    <name type="scientific">Rickettsia massiliae (strain Mtu5)</name>
    <dbReference type="NCBI Taxonomy" id="416276"/>
    <lineage>
        <taxon>Bacteria</taxon>
        <taxon>Pseudomonadati</taxon>
        <taxon>Pseudomonadota</taxon>
        <taxon>Alphaproteobacteria</taxon>
        <taxon>Rickettsiales</taxon>
        <taxon>Rickettsiaceae</taxon>
        <taxon>Rickettsieae</taxon>
        <taxon>Rickettsia</taxon>
        <taxon>spotted fever group</taxon>
    </lineage>
</organism>
<comment type="function">
    <text evidence="1">Catalyzes the base-exchange of a guanine (G) residue with the queuine precursor 7-aminomethyl-7-deazaguanine (PreQ1) at position 34 (anticodon wobble position) in tRNAs with GU(N) anticodons (tRNA-Asp, -Asn, -His and -Tyr). Catalysis occurs through a double-displacement mechanism. The nucleophile active site attacks the C1' of nucleotide 34 to detach the guanine base from the RNA, forming a covalent enzyme-RNA intermediate. The proton acceptor active site deprotonates the incoming PreQ1, allowing a nucleophilic attack on the C1' of the ribose to form the product. After dissociation, two additional enzymatic reactions on the tRNA convert PreQ1 to queuine (Q), resulting in the hypermodified nucleoside queuosine (7-(((4,5-cis-dihydroxy-2-cyclopenten-1-yl)amino)methyl)-7-deazaguanosine).</text>
</comment>
<comment type="catalytic activity">
    <reaction evidence="1">
        <text>7-aminomethyl-7-carbaguanine + guanosine(34) in tRNA = 7-aminomethyl-7-carbaguanosine(34) in tRNA + guanine</text>
        <dbReference type="Rhea" id="RHEA:24104"/>
        <dbReference type="Rhea" id="RHEA-COMP:10341"/>
        <dbReference type="Rhea" id="RHEA-COMP:10342"/>
        <dbReference type="ChEBI" id="CHEBI:16235"/>
        <dbReference type="ChEBI" id="CHEBI:58703"/>
        <dbReference type="ChEBI" id="CHEBI:74269"/>
        <dbReference type="ChEBI" id="CHEBI:82833"/>
        <dbReference type="EC" id="2.4.2.29"/>
    </reaction>
</comment>
<comment type="cofactor">
    <cofactor evidence="1">
        <name>Zn(2+)</name>
        <dbReference type="ChEBI" id="CHEBI:29105"/>
    </cofactor>
    <text evidence="1">Binds 1 zinc ion per subunit.</text>
</comment>
<comment type="pathway">
    <text evidence="1">tRNA modification; tRNA-queuosine biosynthesis.</text>
</comment>
<comment type="subunit">
    <text evidence="1">Homodimer. Within each dimer, one monomer is responsible for RNA recognition and catalysis, while the other monomer binds to the replacement base PreQ1.</text>
</comment>
<comment type="similarity">
    <text evidence="1">Belongs to the queuine tRNA-ribosyltransferase family.</text>
</comment>
<gene>
    <name evidence="1" type="primary">tgt</name>
    <name type="ordered locus">RMA_1133</name>
</gene>